<comment type="function">
    <text evidence="1">Binds the lower part of the 30S subunit head. Binds mRNA in the 70S ribosome, positioning it for translation.</text>
</comment>
<comment type="subunit">
    <text evidence="1">Part of the 30S ribosomal subunit. Forms a tight complex with proteins S10 and S14.</text>
</comment>
<comment type="similarity">
    <text evidence="1">Belongs to the universal ribosomal protein uS3 family.</text>
</comment>
<name>RS3_BUCAI</name>
<organism>
    <name type="scientific">Buchnera aphidicola subsp. Acyrthosiphon pisum (strain APS)</name>
    <name type="common">Acyrthosiphon pisum symbiotic bacterium</name>
    <dbReference type="NCBI Taxonomy" id="107806"/>
    <lineage>
        <taxon>Bacteria</taxon>
        <taxon>Pseudomonadati</taxon>
        <taxon>Pseudomonadota</taxon>
        <taxon>Gammaproteobacteria</taxon>
        <taxon>Enterobacterales</taxon>
        <taxon>Erwiniaceae</taxon>
        <taxon>Buchnera</taxon>
    </lineage>
</organism>
<dbReference type="EMBL" id="BA000003">
    <property type="protein sequence ID" value="BAB13211.1"/>
    <property type="molecule type" value="Genomic_DNA"/>
</dbReference>
<dbReference type="RefSeq" id="NP_240325.1">
    <property type="nucleotide sequence ID" value="NC_002528.1"/>
</dbReference>
<dbReference type="RefSeq" id="WP_010896147.1">
    <property type="nucleotide sequence ID" value="NC_002528.1"/>
</dbReference>
<dbReference type="SMR" id="P57585"/>
<dbReference type="STRING" id="563178.BUAP5A_511"/>
<dbReference type="EnsemblBacteria" id="BAB13211">
    <property type="protein sequence ID" value="BAB13211"/>
    <property type="gene ID" value="BAB13211"/>
</dbReference>
<dbReference type="KEGG" id="buc:BU518"/>
<dbReference type="PATRIC" id="fig|107806.10.peg.523"/>
<dbReference type="eggNOG" id="COG0092">
    <property type="taxonomic scope" value="Bacteria"/>
</dbReference>
<dbReference type="HOGENOM" id="CLU_058591_0_2_6"/>
<dbReference type="Proteomes" id="UP000001806">
    <property type="component" value="Chromosome"/>
</dbReference>
<dbReference type="GO" id="GO:0022627">
    <property type="term" value="C:cytosolic small ribosomal subunit"/>
    <property type="evidence" value="ECO:0007669"/>
    <property type="project" value="TreeGrafter"/>
</dbReference>
<dbReference type="GO" id="GO:0003729">
    <property type="term" value="F:mRNA binding"/>
    <property type="evidence" value="ECO:0007669"/>
    <property type="project" value="UniProtKB-UniRule"/>
</dbReference>
<dbReference type="GO" id="GO:0019843">
    <property type="term" value="F:rRNA binding"/>
    <property type="evidence" value="ECO:0007669"/>
    <property type="project" value="UniProtKB-UniRule"/>
</dbReference>
<dbReference type="GO" id="GO:0003735">
    <property type="term" value="F:structural constituent of ribosome"/>
    <property type="evidence" value="ECO:0007669"/>
    <property type="project" value="InterPro"/>
</dbReference>
<dbReference type="GO" id="GO:0006412">
    <property type="term" value="P:translation"/>
    <property type="evidence" value="ECO:0007669"/>
    <property type="project" value="UniProtKB-UniRule"/>
</dbReference>
<dbReference type="CDD" id="cd02412">
    <property type="entry name" value="KH-II_30S_S3"/>
    <property type="match status" value="1"/>
</dbReference>
<dbReference type="FunFam" id="3.30.1140.32:FF:000001">
    <property type="entry name" value="30S ribosomal protein S3"/>
    <property type="match status" value="1"/>
</dbReference>
<dbReference type="FunFam" id="3.30.300.20:FF:000001">
    <property type="entry name" value="30S ribosomal protein S3"/>
    <property type="match status" value="1"/>
</dbReference>
<dbReference type="Gene3D" id="3.30.300.20">
    <property type="match status" value="1"/>
</dbReference>
<dbReference type="Gene3D" id="3.30.1140.32">
    <property type="entry name" value="Ribosomal protein S3, C-terminal domain"/>
    <property type="match status" value="1"/>
</dbReference>
<dbReference type="HAMAP" id="MF_01309_B">
    <property type="entry name" value="Ribosomal_uS3_B"/>
    <property type="match status" value="1"/>
</dbReference>
<dbReference type="InterPro" id="IPR004087">
    <property type="entry name" value="KH_dom"/>
</dbReference>
<dbReference type="InterPro" id="IPR015946">
    <property type="entry name" value="KH_dom-like_a/b"/>
</dbReference>
<dbReference type="InterPro" id="IPR004044">
    <property type="entry name" value="KH_dom_type_2"/>
</dbReference>
<dbReference type="InterPro" id="IPR009019">
    <property type="entry name" value="KH_sf_prok-type"/>
</dbReference>
<dbReference type="InterPro" id="IPR036419">
    <property type="entry name" value="Ribosomal_S3_C_sf"/>
</dbReference>
<dbReference type="InterPro" id="IPR005704">
    <property type="entry name" value="Ribosomal_uS3_bac-typ"/>
</dbReference>
<dbReference type="InterPro" id="IPR001351">
    <property type="entry name" value="Ribosomal_uS3_C"/>
</dbReference>
<dbReference type="InterPro" id="IPR018280">
    <property type="entry name" value="Ribosomal_uS3_CS"/>
</dbReference>
<dbReference type="NCBIfam" id="TIGR01009">
    <property type="entry name" value="rpsC_bact"/>
    <property type="match status" value="1"/>
</dbReference>
<dbReference type="PANTHER" id="PTHR11760">
    <property type="entry name" value="30S/40S RIBOSOMAL PROTEIN S3"/>
    <property type="match status" value="1"/>
</dbReference>
<dbReference type="PANTHER" id="PTHR11760:SF19">
    <property type="entry name" value="SMALL RIBOSOMAL SUBUNIT PROTEIN US3C"/>
    <property type="match status" value="1"/>
</dbReference>
<dbReference type="Pfam" id="PF07650">
    <property type="entry name" value="KH_2"/>
    <property type="match status" value="1"/>
</dbReference>
<dbReference type="Pfam" id="PF00189">
    <property type="entry name" value="Ribosomal_S3_C"/>
    <property type="match status" value="1"/>
</dbReference>
<dbReference type="SMART" id="SM00322">
    <property type="entry name" value="KH"/>
    <property type="match status" value="1"/>
</dbReference>
<dbReference type="SUPFAM" id="SSF54814">
    <property type="entry name" value="Prokaryotic type KH domain (KH-domain type II)"/>
    <property type="match status" value="1"/>
</dbReference>
<dbReference type="SUPFAM" id="SSF54821">
    <property type="entry name" value="Ribosomal protein S3 C-terminal domain"/>
    <property type="match status" value="1"/>
</dbReference>
<dbReference type="PROSITE" id="PS50823">
    <property type="entry name" value="KH_TYPE_2"/>
    <property type="match status" value="1"/>
</dbReference>
<dbReference type="PROSITE" id="PS00548">
    <property type="entry name" value="RIBOSOMAL_S3"/>
    <property type="match status" value="1"/>
</dbReference>
<keyword id="KW-1185">Reference proteome</keyword>
<keyword id="KW-0687">Ribonucleoprotein</keyword>
<keyword id="KW-0689">Ribosomal protein</keyword>
<keyword id="KW-0694">RNA-binding</keyword>
<keyword id="KW-0699">rRNA-binding</keyword>
<reference key="1">
    <citation type="journal article" date="2000" name="Nature">
        <title>Genome sequence of the endocellular bacterial symbiont of aphids Buchnera sp. APS.</title>
        <authorList>
            <person name="Shigenobu S."/>
            <person name="Watanabe H."/>
            <person name="Hattori M."/>
            <person name="Sakaki Y."/>
            <person name="Ishikawa H."/>
        </authorList>
    </citation>
    <scope>NUCLEOTIDE SEQUENCE [LARGE SCALE GENOMIC DNA]</scope>
    <source>
        <strain>APS</strain>
    </source>
</reference>
<proteinExistence type="inferred from homology"/>
<evidence type="ECO:0000255" key="1">
    <source>
        <dbReference type="HAMAP-Rule" id="MF_01309"/>
    </source>
</evidence>
<evidence type="ECO:0000305" key="2"/>
<protein>
    <recommendedName>
        <fullName evidence="1">Small ribosomal subunit protein uS3</fullName>
    </recommendedName>
    <alternativeName>
        <fullName evidence="2">30S ribosomal protein S3</fullName>
    </alternativeName>
</protein>
<feature type="chain" id="PRO_0000130087" description="Small ribosomal subunit protein uS3">
    <location>
        <begin position="1"/>
        <end position="233"/>
    </location>
</feature>
<feature type="domain" description="KH type-2" evidence="1">
    <location>
        <begin position="39"/>
        <end position="107"/>
    </location>
</feature>
<gene>
    <name evidence="1" type="primary">rpsC</name>
    <name type="ordered locus">BU518</name>
</gene>
<accession>P57585</accession>
<sequence>MGQKVHPNGMRLGIIKKWNSVWFANTKDFADHLDSDYKVRQFLMKTLEKASISRIIIERPAKSIRVTIYTARPGIVIGKKGEDVEKLRISIAKITGVPVQINISEVRKPELDAKLVSDSITSQLERRVMFRRAMKRSVQNAMRQGAKGIKVEVSGRLGGAEIARREWYREGRVPLHTLRANIDYSISEAHTTYGVIGVKVWIFKGEILGGMETVERLDKPSVQTKKQYRKNRK</sequence>